<keyword id="KW-0963">Cytoplasm</keyword>
<keyword id="KW-0489">Methyltransferase</keyword>
<keyword id="KW-1185">Reference proteome</keyword>
<keyword id="KW-0949">S-adenosyl-L-methionine</keyword>
<keyword id="KW-0808">Transferase</keyword>
<keyword id="KW-0819">tRNA processing</keyword>
<comment type="function">
    <text evidence="1">Specifically catalyzes the AdoMet-dependent 2'-O-ribose methylation of cytidine at position 56 in tRNAs.</text>
</comment>
<comment type="catalytic activity">
    <reaction evidence="1">
        <text>cytidine(56) in tRNA + S-adenosyl-L-methionine = 2'-O-methylcytidine(56) in tRNA + S-adenosyl-L-homocysteine + H(+)</text>
        <dbReference type="Rhea" id="RHEA:42968"/>
        <dbReference type="Rhea" id="RHEA-COMP:10308"/>
        <dbReference type="Rhea" id="RHEA-COMP:10309"/>
        <dbReference type="ChEBI" id="CHEBI:15378"/>
        <dbReference type="ChEBI" id="CHEBI:57856"/>
        <dbReference type="ChEBI" id="CHEBI:59789"/>
        <dbReference type="ChEBI" id="CHEBI:74495"/>
        <dbReference type="ChEBI" id="CHEBI:82748"/>
        <dbReference type="EC" id="2.1.1.206"/>
    </reaction>
</comment>
<comment type="subunit">
    <text evidence="1">Homodimer.</text>
</comment>
<comment type="subcellular location">
    <subcellularLocation>
        <location evidence="1">Cytoplasm</location>
    </subcellularLocation>
</comment>
<comment type="similarity">
    <text evidence="1">Belongs to the aTrm56 family.</text>
</comment>
<feature type="chain" id="PRO_0000146936" description="tRNA (cytidine(56)-2'-O)-methyltransferase">
    <location>
        <begin position="1"/>
        <end position="180"/>
    </location>
</feature>
<feature type="binding site" evidence="1">
    <location>
        <position position="85"/>
    </location>
    <ligand>
        <name>S-adenosyl-L-methionine</name>
        <dbReference type="ChEBI" id="CHEBI:59789"/>
    </ligand>
</feature>
<feature type="binding site" evidence="1">
    <location>
        <begin position="114"/>
        <end position="118"/>
    </location>
    <ligand>
        <name>S-adenosyl-L-methionine</name>
        <dbReference type="ChEBI" id="CHEBI:59789"/>
    </ligand>
</feature>
<feature type="binding site" evidence="1">
    <location>
        <begin position="132"/>
        <end position="139"/>
    </location>
    <ligand>
        <name>S-adenosyl-L-methionine</name>
        <dbReference type="ChEBI" id="CHEBI:59789"/>
    </ligand>
</feature>
<organism>
    <name type="scientific">Thermococcus kodakarensis (strain ATCC BAA-918 / JCM 12380 / KOD1)</name>
    <name type="common">Pyrococcus kodakaraensis (strain KOD1)</name>
    <dbReference type="NCBI Taxonomy" id="69014"/>
    <lineage>
        <taxon>Archaea</taxon>
        <taxon>Methanobacteriati</taxon>
        <taxon>Methanobacteriota</taxon>
        <taxon>Thermococci</taxon>
        <taxon>Thermococcales</taxon>
        <taxon>Thermococcaceae</taxon>
        <taxon>Thermococcus</taxon>
    </lineage>
</organism>
<dbReference type="EC" id="2.1.1.206" evidence="1"/>
<dbReference type="EMBL" id="AP006878">
    <property type="protein sequence ID" value="BAD84249.1"/>
    <property type="molecule type" value="Genomic_DNA"/>
</dbReference>
<dbReference type="SMR" id="Q5JEG5"/>
<dbReference type="FunCoup" id="Q5JEG5">
    <property type="interactions" value="1"/>
</dbReference>
<dbReference type="STRING" id="69014.TK0060"/>
<dbReference type="EnsemblBacteria" id="BAD84249">
    <property type="protein sequence ID" value="BAD84249"/>
    <property type="gene ID" value="TK0060"/>
</dbReference>
<dbReference type="KEGG" id="tko:TK0060"/>
<dbReference type="PATRIC" id="fig|69014.16.peg.61"/>
<dbReference type="eggNOG" id="arCOG01857">
    <property type="taxonomic scope" value="Archaea"/>
</dbReference>
<dbReference type="HOGENOM" id="CLU_123709_0_0_2"/>
<dbReference type="InParanoid" id="Q5JEG5"/>
<dbReference type="PhylomeDB" id="Q5JEG5"/>
<dbReference type="Proteomes" id="UP000000536">
    <property type="component" value="Chromosome"/>
</dbReference>
<dbReference type="GO" id="GO:0005737">
    <property type="term" value="C:cytoplasm"/>
    <property type="evidence" value="ECO:0007669"/>
    <property type="project" value="UniProtKB-SubCell"/>
</dbReference>
<dbReference type="GO" id="GO:0106059">
    <property type="term" value="F:tRNA (cytidine(56)-2'-O)-methyltransferase activity"/>
    <property type="evidence" value="ECO:0007669"/>
    <property type="project" value="UniProtKB-EC"/>
</dbReference>
<dbReference type="GO" id="GO:0002128">
    <property type="term" value="P:tRNA nucleoside ribose methylation"/>
    <property type="evidence" value="ECO:0007669"/>
    <property type="project" value="UniProtKB-UniRule"/>
</dbReference>
<dbReference type="CDD" id="cd18083">
    <property type="entry name" value="aTrm56-like"/>
    <property type="match status" value="1"/>
</dbReference>
<dbReference type="Gene3D" id="3.40.1280.10">
    <property type="match status" value="1"/>
</dbReference>
<dbReference type="HAMAP" id="MF_00077">
    <property type="entry name" value="tRNA_methyltr_aTrm56"/>
    <property type="match status" value="1"/>
</dbReference>
<dbReference type="InterPro" id="IPR029028">
    <property type="entry name" value="Alpha/beta_knot_MTases"/>
</dbReference>
<dbReference type="InterPro" id="IPR029026">
    <property type="entry name" value="tRNA_m1G_MTases_N"/>
</dbReference>
<dbReference type="InterPro" id="IPR002845">
    <property type="entry name" value="tRNA_mtfrase_aTrm56"/>
</dbReference>
<dbReference type="NCBIfam" id="NF003048">
    <property type="entry name" value="PRK03958.1"/>
    <property type="match status" value="1"/>
</dbReference>
<dbReference type="PANTHER" id="PTHR42197">
    <property type="entry name" value="TRNA (CYTIDINE(56)-2'-O)-METHYLTRANSFERASE"/>
    <property type="match status" value="1"/>
</dbReference>
<dbReference type="PANTHER" id="PTHR42197:SF1">
    <property type="entry name" value="TRNA (CYTIDINE(56)-2'-O)-METHYLTRANSFERASE"/>
    <property type="match status" value="1"/>
</dbReference>
<dbReference type="Pfam" id="PF01994">
    <property type="entry name" value="Trm56"/>
    <property type="match status" value="1"/>
</dbReference>
<dbReference type="PIRSF" id="PIRSF016123">
    <property type="entry name" value="UCP016123"/>
    <property type="match status" value="1"/>
</dbReference>
<dbReference type="SUPFAM" id="SSF75217">
    <property type="entry name" value="alpha/beta knot"/>
    <property type="match status" value="1"/>
</dbReference>
<sequence>MRKMIAVLRLGHRPERDKRITTHVALTARAFGADKIIIAAEEDEHVKESVEDVVNRWGGPFEIEFNPSWKKILREWKDRGIIVHLTMYGIHIDDAIPRIKDELKSGKDLLIVVGAEKVPREVYEMADYNVAVGNQPHSEVAALAVFLDRLLDGAGLRKEFHNAKLKIVPQERGKKVLQLE</sequence>
<proteinExistence type="inferred from homology"/>
<reference key="1">
    <citation type="journal article" date="2005" name="Genome Res.">
        <title>Complete genome sequence of the hyperthermophilic archaeon Thermococcus kodakaraensis KOD1 and comparison with Pyrococcus genomes.</title>
        <authorList>
            <person name="Fukui T."/>
            <person name="Atomi H."/>
            <person name="Kanai T."/>
            <person name="Matsumi R."/>
            <person name="Fujiwara S."/>
            <person name="Imanaka T."/>
        </authorList>
    </citation>
    <scope>NUCLEOTIDE SEQUENCE [LARGE SCALE GENOMIC DNA]</scope>
    <source>
        <strain>ATCC BAA-918 / JCM 12380 / KOD1</strain>
    </source>
</reference>
<gene>
    <name type="ordered locus">TK0060</name>
</gene>
<evidence type="ECO:0000255" key="1">
    <source>
        <dbReference type="HAMAP-Rule" id="MF_00077"/>
    </source>
</evidence>
<accession>Q5JEG5</accession>
<name>TRM56_THEKO</name>
<protein>
    <recommendedName>
        <fullName evidence="1">tRNA (cytidine(56)-2'-O)-methyltransferase</fullName>
        <ecNumber evidence="1">2.1.1.206</ecNumber>
    </recommendedName>
    <alternativeName>
        <fullName evidence="1">tRNA ribose 2'-O-methyltransferase aTrm56</fullName>
    </alternativeName>
</protein>